<evidence type="ECO:0000250" key="1">
    <source>
        <dbReference type="UniProtKB" id="Q4KLI2"/>
    </source>
</evidence>
<evidence type="ECO:0000250" key="2">
    <source>
        <dbReference type="UniProtKB" id="Q8TBZ6"/>
    </source>
</evidence>
<evidence type="ECO:0000255" key="3"/>
<evidence type="ECO:0000255" key="4">
    <source>
        <dbReference type="PROSITE-ProRule" id="PRU01012"/>
    </source>
</evidence>
<evidence type="ECO:0000256" key="5">
    <source>
        <dbReference type="SAM" id="MobiDB-lite"/>
    </source>
</evidence>
<evidence type="ECO:0000305" key="6"/>
<protein>
    <recommendedName>
        <fullName>tRNA methyltransferase 10 homolog A</fullName>
        <ecNumber evidence="2">2.1.1.221</ecNumber>
    </recommendedName>
    <alternativeName>
        <fullName>RNA (guanine-9-)-methyltransferase domain-containing protein 2</fullName>
    </alternativeName>
    <alternativeName>
        <fullName>tRNA (guanine(9)-N(1))-methyltransferase TRMT10A</fullName>
    </alternativeName>
</protein>
<feature type="chain" id="PRO_0000311316" description="tRNA methyltransferase 10 homolog A">
    <location>
        <begin position="1"/>
        <end position="328"/>
    </location>
</feature>
<feature type="domain" description="SAM-dependent MTase TRM10-type" evidence="4">
    <location>
        <begin position="88"/>
        <end position="278"/>
    </location>
</feature>
<feature type="region of interest" description="Disordered" evidence="5">
    <location>
        <begin position="1"/>
        <end position="91"/>
    </location>
</feature>
<feature type="region of interest" description="Disordered" evidence="5">
    <location>
        <begin position="281"/>
        <end position="328"/>
    </location>
</feature>
<feature type="coiled-coil region" evidence="3">
    <location>
        <begin position="43"/>
        <end position="83"/>
    </location>
</feature>
<feature type="compositionally biased region" description="Basic and acidic residues" evidence="5">
    <location>
        <begin position="52"/>
        <end position="62"/>
    </location>
</feature>
<feature type="compositionally biased region" description="Basic residues" evidence="5">
    <location>
        <begin position="63"/>
        <end position="75"/>
    </location>
</feature>
<feature type="compositionally biased region" description="Basic and acidic residues" evidence="5">
    <location>
        <begin position="305"/>
        <end position="319"/>
    </location>
</feature>
<feature type="modified residue" description="Phosphoserine" evidence="1">
    <location>
        <position position="22"/>
    </location>
</feature>
<feature type="sequence conflict" description="In Ref. 2; AAH90650/AAH98478." evidence="6" ref="2">
    <original>P</original>
    <variation>T</variation>
    <location>
        <position position="13"/>
    </location>
</feature>
<feature type="sequence conflict" description="In Ref. 2; AAH98478." evidence="6" ref="2">
    <original>N</original>
    <variation>D</variation>
    <location>
        <position position="82"/>
    </location>
</feature>
<feature type="sequence conflict" description="In Ref. 2; AAH22121/AAH90650/AAH98478." evidence="6" ref="2">
    <original>S</original>
    <variation>N</variation>
    <location>
        <position position="211"/>
    </location>
</feature>
<feature type="sequence conflict" description="In Ref. 2; AAH22121." evidence="6" ref="2">
    <original>E</original>
    <variation>K</variation>
    <location>
        <position position="227"/>
    </location>
</feature>
<feature type="sequence conflict" description="In Ref. 2; AAH22121." evidence="6" ref="2">
    <original>R</original>
    <variation>K</variation>
    <location>
        <position position="261"/>
    </location>
</feature>
<feature type="sequence conflict" description="In Ref. 2; AAH22121." evidence="6" ref="2">
    <original>S</original>
    <variation>R</variation>
    <location>
        <position position="306"/>
    </location>
</feature>
<feature type="sequence conflict" description="In Ref. 2; AAH90650/AAH98478." evidence="6" ref="2">
    <original>D</original>
    <variation>V</variation>
    <location>
        <position position="312"/>
    </location>
</feature>
<feature type="sequence conflict" description="In Ref. 2; AAH22121." evidence="6" ref="2">
    <original>P</original>
    <variation>L</variation>
    <location>
        <position position="325"/>
    </location>
</feature>
<comment type="function">
    <text evidence="2">S-adenosyl-L-methionine-dependent guanine N(1)-methyltransferase that catalyzes the formation of N(1)-methylguanine at position 9 (m1G9) in tRNAs. Probably not able to catalyze formation of N(1)-methyladenine at position 9 (m1A9) in tRNAs.</text>
</comment>
<comment type="catalytic activity">
    <reaction evidence="2">
        <text>guanosine(9) in tRNA + S-adenosyl-L-methionine = N(1)-methylguanosine(9) in tRNA + S-adenosyl-L-homocysteine + H(+)</text>
        <dbReference type="Rhea" id="RHEA:43156"/>
        <dbReference type="Rhea" id="RHEA-COMP:10367"/>
        <dbReference type="Rhea" id="RHEA-COMP:10368"/>
        <dbReference type="ChEBI" id="CHEBI:15378"/>
        <dbReference type="ChEBI" id="CHEBI:57856"/>
        <dbReference type="ChEBI" id="CHEBI:59789"/>
        <dbReference type="ChEBI" id="CHEBI:73542"/>
        <dbReference type="ChEBI" id="CHEBI:74269"/>
        <dbReference type="EC" id="2.1.1.221"/>
    </reaction>
</comment>
<comment type="subunit">
    <text evidence="2">Interacts with tRNA.</text>
</comment>
<comment type="subcellular location">
    <subcellularLocation>
        <location evidence="2">Nucleus</location>
    </subcellularLocation>
    <subcellularLocation>
        <location evidence="2">Nucleus</location>
        <location evidence="2">Nucleolus</location>
    </subcellularLocation>
</comment>
<comment type="similarity">
    <text evidence="4">Belongs to the class IV-like SAM-binding methyltransferase superfamily. TRM10 family.</text>
</comment>
<comment type="sequence caution" evidence="6">
    <conflict type="miscellaneous discrepancy">
        <sequence resource="EMBL-CDS" id="AAH22121"/>
    </conflict>
    <text>Contaminating sequence. Sequence of unknown origin in the N-terminal part.</text>
</comment>
<comment type="sequence caution" evidence="6">
    <conflict type="erroneous initiation">
        <sequence resource="EMBL-CDS" id="AAH90650"/>
    </conflict>
    <text>Extended N-terminus.</text>
</comment>
<comment type="sequence caution" evidence="6">
    <conflict type="erroneous initiation">
        <sequence resource="EMBL-CDS" id="AAH98478"/>
    </conflict>
    <text>Extended N-terminus.</text>
</comment>
<comment type="sequence caution" evidence="6">
    <conflict type="erroneous initiation">
        <sequence resource="EMBL-CDS" id="BAC41020"/>
    </conflict>
    <text>Extended N-terminus.</text>
</comment>
<gene>
    <name type="primary">Trmt10a</name>
    <name type="synonym">Rg9mtd2</name>
</gene>
<organism>
    <name type="scientific">Mus musculus</name>
    <name type="common">Mouse</name>
    <dbReference type="NCBI Taxonomy" id="10090"/>
    <lineage>
        <taxon>Eukaryota</taxon>
        <taxon>Metazoa</taxon>
        <taxon>Chordata</taxon>
        <taxon>Craniata</taxon>
        <taxon>Vertebrata</taxon>
        <taxon>Euteleostomi</taxon>
        <taxon>Mammalia</taxon>
        <taxon>Eutheria</taxon>
        <taxon>Euarchontoglires</taxon>
        <taxon>Glires</taxon>
        <taxon>Rodentia</taxon>
        <taxon>Myomorpha</taxon>
        <taxon>Muroidea</taxon>
        <taxon>Muridae</taxon>
        <taxon>Murinae</taxon>
        <taxon>Mus</taxon>
        <taxon>Mus</taxon>
    </lineage>
</organism>
<reference key="1">
    <citation type="journal article" date="2005" name="Science">
        <title>The transcriptional landscape of the mammalian genome.</title>
        <authorList>
            <person name="Carninci P."/>
            <person name="Kasukawa T."/>
            <person name="Katayama S."/>
            <person name="Gough J."/>
            <person name="Frith M.C."/>
            <person name="Maeda N."/>
            <person name="Oyama R."/>
            <person name="Ravasi T."/>
            <person name="Lenhard B."/>
            <person name="Wells C."/>
            <person name="Kodzius R."/>
            <person name="Shimokawa K."/>
            <person name="Bajic V.B."/>
            <person name="Brenner S.E."/>
            <person name="Batalov S."/>
            <person name="Forrest A.R."/>
            <person name="Zavolan M."/>
            <person name="Davis M.J."/>
            <person name="Wilming L.G."/>
            <person name="Aidinis V."/>
            <person name="Allen J.E."/>
            <person name="Ambesi-Impiombato A."/>
            <person name="Apweiler R."/>
            <person name="Aturaliya R.N."/>
            <person name="Bailey T.L."/>
            <person name="Bansal M."/>
            <person name="Baxter L."/>
            <person name="Beisel K.W."/>
            <person name="Bersano T."/>
            <person name="Bono H."/>
            <person name="Chalk A.M."/>
            <person name="Chiu K.P."/>
            <person name="Choudhary V."/>
            <person name="Christoffels A."/>
            <person name="Clutterbuck D.R."/>
            <person name="Crowe M.L."/>
            <person name="Dalla E."/>
            <person name="Dalrymple B.P."/>
            <person name="de Bono B."/>
            <person name="Della Gatta G."/>
            <person name="di Bernardo D."/>
            <person name="Down T."/>
            <person name="Engstrom P."/>
            <person name="Fagiolini M."/>
            <person name="Faulkner G."/>
            <person name="Fletcher C.F."/>
            <person name="Fukushima T."/>
            <person name="Furuno M."/>
            <person name="Futaki S."/>
            <person name="Gariboldi M."/>
            <person name="Georgii-Hemming P."/>
            <person name="Gingeras T.R."/>
            <person name="Gojobori T."/>
            <person name="Green R.E."/>
            <person name="Gustincich S."/>
            <person name="Harbers M."/>
            <person name="Hayashi Y."/>
            <person name="Hensch T.K."/>
            <person name="Hirokawa N."/>
            <person name="Hill D."/>
            <person name="Huminiecki L."/>
            <person name="Iacono M."/>
            <person name="Ikeo K."/>
            <person name="Iwama A."/>
            <person name="Ishikawa T."/>
            <person name="Jakt M."/>
            <person name="Kanapin A."/>
            <person name="Katoh M."/>
            <person name="Kawasawa Y."/>
            <person name="Kelso J."/>
            <person name="Kitamura H."/>
            <person name="Kitano H."/>
            <person name="Kollias G."/>
            <person name="Krishnan S.P."/>
            <person name="Kruger A."/>
            <person name="Kummerfeld S.K."/>
            <person name="Kurochkin I.V."/>
            <person name="Lareau L.F."/>
            <person name="Lazarevic D."/>
            <person name="Lipovich L."/>
            <person name="Liu J."/>
            <person name="Liuni S."/>
            <person name="McWilliam S."/>
            <person name="Madan Babu M."/>
            <person name="Madera M."/>
            <person name="Marchionni L."/>
            <person name="Matsuda H."/>
            <person name="Matsuzawa S."/>
            <person name="Miki H."/>
            <person name="Mignone F."/>
            <person name="Miyake S."/>
            <person name="Morris K."/>
            <person name="Mottagui-Tabar S."/>
            <person name="Mulder N."/>
            <person name="Nakano N."/>
            <person name="Nakauchi H."/>
            <person name="Ng P."/>
            <person name="Nilsson R."/>
            <person name="Nishiguchi S."/>
            <person name="Nishikawa S."/>
            <person name="Nori F."/>
            <person name="Ohara O."/>
            <person name="Okazaki Y."/>
            <person name="Orlando V."/>
            <person name="Pang K.C."/>
            <person name="Pavan W.J."/>
            <person name="Pavesi G."/>
            <person name="Pesole G."/>
            <person name="Petrovsky N."/>
            <person name="Piazza S."/>
            <person name="Reed J."/>
            <person name="Reid J.F."/>
            <person name="Ring B.Z."/>
            <person name="Ringwald M."/>
            <person name="Rost B."/>
            <person name="Ruan Y."/>
            <person name="Salzberg S.L."/>
            <person name="Sandelin A."/>
            <person name="Schneider C."/>
            <person name="Schoenbach C."/>
            <person name="Sekiguchi K."/>
            <person name="Semple C.A."/>
            <person name="Seno S."/>
            <person name="Sessa L."/>
            <person name="Sheng Y."/>
            <person name="Shibata Y."/>
            <person name="Shimada H."/>
            <person name="Shimada K."/>
            <person name="Silva D."/>
            <person name="Sinclair B."/>
            <person name="Sperling S."/>
            <person name="Stupka E."/>
            <person name="Sugiura K."/>
            <person name="Sultana R."/>
            <person name="Takenaka Y."/>
            <person name="Taki K."/>
            <person name="Tammoja K."/>
            <person name="Tan S.L."/>
            <person name="Tang S."/>
            <person name="Taylor M.S."/>
            <person name="Tegner J."/>
            <person name="Teichmann S.A."/>
            <person name="Ueda H.R."/>
            <person name="van Nimwegen E."/>
            <person name="Verardo R."/>
            <person name="Wei C.L."/>
            <person name="Yagi K."/>
            <person name="Yamanishi H."/>
            <person name="Zabarovsky E."/>
            <person name="Zhu S."/>
            <person name="Zimmer A."/>
            <person name="Hide W."/>
            <person name="Bult C."/>
            <person name="Grimmond S.M."/>
            <person name="Teasdale R.D."/>
            <person name="Liu E.T."/>
            <person name="Brusic V."/>
            <person name="Quackenbush J."/>
            <person name="Wahlestedt C."/>
            <person name="Mattick J.S."/>
            <person name="Hume D.A."/>
            <person name="Kai C."/>
            <person name="Sasaki D."/>
            <person name="Tomaru Y."/>
            <person name="Fukuda S."/>
            <person name="Kanamori-Katayama M."/>
            <person name="Suzuki M."/>
            <person name="Aoki J."/>
            <person name="Arakawa T."/>
            <person name="Iida J."/>
            <person name="Imamura K."/>
            <person name="Itoh M."/>
            <person name="Kato T."/>
            <person name="Kawaji H."/>
            <person name="Kawagashira N."/>
            <person name="Kawashima T."/>
            <person name="Kojima M."/>
            <person name="Kondo S."/>
            <person name="Konno H."/>
            <person name="Nakano K."/>
            <person name="Ninomiya N."/>
            <person name="Nishio T."/>
            <person name="Okada M."/>
            <person name="Plessy C."/>
            <person name="Shibata K."/>
            <person name="Shiraki T."/>
            <person name="Suzuki S."/>
            <person name="Tagami M."/>
            <person name="Waki K."/>
            <person name="Watahiki A."/>
            <person name="Okamura-Oho Y."/>
            <person name="Suzuki H."/>
            <person name="Kawai J."/>
            <person name="Hayashizaki Y."/>
        </authorList>
    </citation>
    <scope>NUCLEOTIDE SEQUENCE [LARGE SCALE MRNA]</scope>
</reference>
<reference key="2">
    <citation type="journal article" date="2004" name="Genome Res.">
        <title>The status, quality, and expansion of the NIH full-length cDNA project: the Mammalian Gene Collection (MGC).</title>
        <authorList>
            <consortium name="The MGC Project Team"/>
        </authorList>
    </citation>
    <scope>NUCLEOTIDE SEQUENCE [LARGE SCALE MRNA]</scope>
    <source>
        <strain>C57BL/6J</strain>
        <strain>Czech II</strain>
        <tissue>Blastocyst</tissue>
        <tissue>Head</tissue>
        <tissue>Mammary tumor</tissue>
    </source>
</reference>
<accession>Q8C1Z8</accession>
<accession>Q4KMM8</accession>
<accession>Q5CZW9</accession>
<accession>Q8VDF5</accession>
<dbReference type="EC" id="2.1.1.221" evidence="2"/>
<dbReference type="EMBL" id="AK089967">
    <property type="protein sequence ID" value="BAC41020.1"/>
    <property type="status" value="ALT_INIT"/>
    <property type="molecule type" value="mRNA"/>
</dbReference>
<dbReference type="EMBL" id="BC022121">
    <property type="protein sequence ID" value="AAH22121.1"/>
    <property type="status" value="ALT_INIT"/>
    <property type="molecule type" value="mRNA"/>
</dbReference>
<dbReference type="EMBL" id="BC090650">
    <property type="protein sequence ID" value="AAH90650.1"/>
    <property type="status" value="ALT_INIT"/>
    <property type="molecule type" value="mRNA"/>
</dbReference>
<dbReference type="EMBL" id="BC098478">
    <property type="protein sequence ID" value="AAH98478.1"/>
    <property type="status" value="ALT_INIT"/>
    <property type="molecule type" value="mRNA"/>
</dbReference>
<dbReference type="CCDS" id="CCDS17866.1"/>
<dbReference type="RefSeq" id="NP_001335125.1">
    <property type="nucleotide sequence ID" value="NM_001348196.1"/>
</dbReference>
<dbReference type="RefSeq" id="NP_001335126.1">
    <property type="nucleotide sequence ID" value="NM_001348197.1"/>
</dbReference>
<dbReference type="RefSeq" id="NP_780598.2">
    <property type="nucleotide sequence ID" value="NM_175389.5"/>
</dbReference>
<dbReference type="RefSeq" id="XP_006500906.1">
    <property type="nucleotide sequence ID" value="XM_006500843.3"/>
</dbReference>
<dbReference type="RefSeq" id="XP_006500907.1">
    <property type="nucleotide sequence ID" value="XM_006500844.1"/>
</dbReference>
<dbReference type="RefSeq" id="XP_006500909.1">
    <property type="nucleotide sequence ID" value="XM_006500846.3"/>
</dbReference>
<dbReference type="RefSeq" id="XP_006500910.1">
    <property type="nucleotide sequence ID" value="XM_006500847.3"/>
</dbReference>
<dbReference type="RefSeq" id="XP_011238285.1">
    <property type="nucleotide sequence ID" value="XM_011239983.2"/>
</dbReference>
<dbReference type="SMR" id="Q8C1Z8"/>
<dbReference type="FunCoup" id="Q8C1Z8">
    <property type="interactions" value="2920"/>
</dbReference>
<dbReference type="IntAct" id="Q8C1Z8">
    <property type="interactions" value="1"/>
</dbReference>
<dbReference type="STRING" id="10090.ENSMUSP00000125749"/>
<dbReference type="iPTMnet" id="Q8C1Z8"/>
<dbReference type="PhosphoSitePlus" id="Q8C1Z8"/>
<dbReference type="jPOST" id="Q8C1Z8"/>
<dbReference type="PaxDb" id="10090-ENSMUSP00000042082"/>
<dbReference type="ProteomicsDB" id="258899"/>
<dbReference type="Pumba" id="Q8C1Z8"/>
<dbReference type="DNASU" id="108943"/>
<dbReference type="GeneID" id="108943"/>
<dbReference type="KEGG" id="mmu:108943"/>
<dbReference type="AGR" id="MGI:1920421"/>
<dbReference type="CTD" id="93587"/>
<dbReference type="MGI" id="MGI:1920421">
    <property type="gene designation" value="Trmt10a"/>
</dbReference>
<dbReference type="eggNOG" id="KOG2967">
    <property type="taxonomic scope" value="Eukaryota"/>
</dbReference>
<dbReference type="InParanoid" id="Q8C1Z8"/>
<dbReference type="PhylomeDB" id="Q8C1Z8"/>
<dbReference type="TreeFam" id="TF330972"/>
<dbReference type="BioGRID-ORCS" id="108943">
    <property type="hits" value="5 hits in 76 CRISPR screens"/>
</dbReference>
<dbReference type="ChiTaRS" id="Trmt10a">
    <property type="organism name" value="mouse"/>
</dbReference>
<dbReference type="PRO" id="PR:Q8C1Z8"/>
<dbReference type="Proteomes" id="UP000000589">
    <property type="component" value="Unplaced"/>
</dbReference>
<dbReference type="RNAct" id="Q8C1Z8">
    <property type="molecule type" value="protein"/>
</dbReference>
<dbReference type="GO" id="GO:0005730">
    <property type="term" value="C:nucleolus"/>
    <property type="evidence" value="ECO:0000250"/>
    <property type="project" value="UniProtKB"/>
</dbReference>
<dbReference type="GO" id="GO:0005634">
    <property type="term" value="C:nucleus"/>
    <property type="evidence" value="ECO:0000250"/>
    <property type="project" value="UniProtKB"/>
</dbReference>
<dbReference type="GO" id="GO:0052905">
    <property type="term" value="F:tRNA (guanosine(9)-N1)-methyltransferase activity"/>
    <property type="evidence" value="ECO:0007669"/>
    <property type="project" value="UniProtKB-EC"/>
</dbReference>
<dbReference type="GO" id="GO:0000049">
    <property type="term" value="F:tRNA binding"/>
    <property type="evidence" value="ECO:0000250"/>
    <property type="project" value="UniProtKB"/>
</dbReference>
<dbReference type="GO" id="GO:0010960">
    <property type="term" value="P:magnesium ion homeostasis"/>
    <property type="evidence" value="ECO:0000315"/>
    <property type="project" value="MGI"/>
</dbReference>
<dbReference type="GO" id="GO:0030488">
    <property type="term" value="P:tRNA methylation"/>
    <property type="evidence" value="ECO:0000250"/>
    <property type="project" value="UniProtKB"/>
</dbReference>
<dbReference type="CDD" id="cd18101">
    <property type="entry name" value="Trm10euk_A"/>
    <property type="match status" value="1"/>
</dbReference>
<dbReference type="FunFam" id="3.40.1280.30:FF:000001">
    <property type="entry name" value="tRNA methyltransferase 10 homolog A"/>
    <property type="match status" value="1"/>
</dbReference>
<dbReference type="Gene3D" id="3.40.1280.30">
    <property type="match status" value="1"/>
</dbReference>
<dbReference type="InterPro" id="IPR028564">
    <property type="entry name" value="MT_TRM10-typ"/>
</dbReference>
<dbReference type="InterPro" id="IPR038459">
    <property type="entry name" value="MT_TRM10-typ_sf"/>
</dbReference>
<dbReference type="InterPro" id="IPR016653">
    <property type="entry name" value="TRM10/TRM10A"/>
</dbReference>
<dbReference type="InterPro" id="IPR007356">
    <property type="entry name" value="tRNA_m1G_MeTrfase_euk"/>
</dbReference>
<dbReference type="InterPro" id="IPR016009">
    <property type="entry name" value="tRNA_MeTrfase_TRMD/TRM10"/>
</dbReference>
<dbReference type="PANTHER" id="PTHR13563">
    <property type="entry name" value="TRNA (GUANINE-9-) METHYLTRANSFERASE"/>
    <property type="match status" value="1"/>
</dbReference>
<dbReference type="PANTHER" id="PTHR13563:SF13">
    <property type="entry name" value="TRNA METHYLTRANSFERASE 10 HOMOLOG A"/>
    <property type="match status" value="1"/>
</dbReference>
<dbReference type="Pfam" id="PF01746">
    <property type="entry name" value="tRNA_m1G_MT"/>
    <property type="match status" value="1"/>
</dbReference>
<dbReference type="PIRSF" id="PIRSF016323">
    <property type="entry name" value="tRNA_m1G_mtfrase_met"/>
    <property type="match status" value="1"/>
</dbReference>
<dbReference type="PROSITE" id="PS51675">
    <property type="entry name" value="SAM_MT_TRM10"/>
    <property type="match status" value="1"/>
</dbReference>
<name>TM10A_MOUSE</name>
<sequence length="328" mass="37966">MSSEMLPASIESPNVEEKLGTSDGEEERQEPRVDAGAEPISKRQLKKLMKQKQWEEQREQRKEKRKEKRKRKKLERRQLESNSDGNDRKRVRRDVARSSLRLVIDCSFDDLMVLKDIKKLHKQIQRCYAENRRASHPVQFYLTSHGGQLKKNMDENDQGWVNWKDIHIKSEHYSELIKKEDLVYLTSDSPNVLKDLDESKAYVIGGLVDHSHHKGLTFKQATSYGIEHAQLPLADFVKMNSRKVLAVNHVFEIILEFLETRDWQEAFFTILPQRKGAVPAHKACESSPQDHQSLPEGWDSASEGESCRDNPDSPQKDEQGQQSSPVLQ</sequence>
<proteinExistence type="evidence at transcript level"/>
<keyword id="KW-0175">Coiled coil</keyword>
<keyword id="KW-0489">Methyltransferase</keyword>
<keyword id="KW-0539">Nucleus</keyword>
<keyword id="KW-0597">Phosphoprotein</keyword>
<keyword id="KW-1185">Reference proteome</keyword>
<keyword id="KW-0949">S-adenosyl-L-methionine</keyword>
<keyword id="KW-0808">Transferase</keyword>